<name>SYT_PSEP7</name>
<dbReference type="EC" id="6.1.1.3" evidence="1"/>
<dbReference type="EMBL" id="CP000744">
    <property type="protein sequence ID" value="ABR85918.1"/>
    <property type="molecule type" value="Genomic_DNA"/>
</dbReference>
<dbReference type="RefSeq" id="WP_003148871.1">
    <property type="nucleotide sequence ID" value="NC_009656.1"/>
</dbReference>
<dbReference type="SMR" id="A6V485"/>
<dbReference type="KEGG" id="pap:PSPA7_2504"/>
<dbReference type="HOGENOM" id="CLU_008554_0_1_6"/>
<dbReference type="Proteomes" id="UP000001582">
    <property type="component" value="Chromosome"/>
</dbReference>
<dbReference type="GO" id="GO:0005829">
    <property type="term" value="C:cytosol"/>
    <property type="evidence" value="ECO:0007669"/>
    <property type="project" value="TreeGrafter"/>
</dbReference>
<dbReference type="GO" id="GO:0005524">
    <property type="term" value="F:ATP binding"/>
    <property type="evidence" value="ECO:0007669"/>
    <property type="project" value="UniProtKB-UniRule"/>
</dbReference>
<dbReference type="GO" id="GO:0046872">
    <property type="term" value="F:metal ion binding"/>
    <property type="evidence" value="ECO:0007669"/>
    <property type="project" value="UniProtKB-KW"/>
</dbReference>
<dbReference type="GO" id="GO:0004829">
    <property type="term" value="F:threonine-tRNA ligase activity"/>
    <property type="evidence" value="ECO:0007669"/>
    <property type="project" value="UniProtKB-UniRule"/>
</dbReference>
<dbReference type="GO" id="GO:0000049">
    <property type="term" value="F:tRNA binding"/>
    <property type="evidence" value="ECO:0007669"/>
    <property type="project" value="UniProtKB-KW"/>
</dbReference>
<dbReference type="GO" id="GO:0006435">
    <property type="term" value="P:threonyl-tRNA aminoacylation"/>
    <property type="evidence" value="ECO:0007669"/>
    <property type="project" value="UniProtKB-UniRule"/>
</dbReference>
<dbReference type="CDD" id="cd01667">
    <property type="entry name" value="TGS_ThrRS"/>
    <property type="match status" value="1"/>
</dbReference>
<dbReference type="CDD" id="cd00860">
    <property type="entry name" value="ThrRS_anticodon"/>
    <property type="match status" value="1"/>
</dbReference>
<dbReference type="CDD" id="cd00771">
    <property type="entry name" value="ThrRS_core"/>
    <property type="match status" value="1"/>
</dbReference>
<dbReference type="FunFam" id="3.10.20.30:FF:000005">
    <property type="entry name" value="Threonine--tRNA ligase"/>
    <property type="match status" value="1"/>
</dbReference>
<dbReference type="FunFam" id="3.30.54.20:FF:000002">
    <property type="entry name" value="Threonine--tRNA ligase"/>
    <property type="match status" value="1"/>
</dbReference>
<dbReference type="FunFam" id="3.30.930.10:FF:000002">
    <property type="entry name" value="Threonine--tRNA ligase"/>
    <property type="match status" value="1"/>
</dbReference>
<dbReference type="FunFam" id="3.40.50.800:FF:000001">
    <property type="entry name" value="Threonine--tRNA ligase"/>
    <property type="match status" value="1"/>
</dbReference>
<dbReference type="FunFam" id="3.30.980.10:FF:000005">
    <property type="entry name" value="Threonyl-tRNA synthetase, mitochondrial"/>
    <property type="match status" value="1"/>
</dbReference>
<dbReference type="Gene3D" id="3.10.20.30">
    <property type="match status" value="1"/>
</dbReference>
<dbReference type="Gene3D" id="3.30.54.20">
    <property type="match status" value="1"/>
</dbReference>
<dbReference type="Gene3D" id="3.40.50.800">
    <property type="entry name" value="Anticodon-binding domain"/>
    <property type="match status" value="1"/>
</dbReference>
<dbReference type="Gene3D" id="3.30.930.10">
    <property type="entry name" value="Bira Bifunctional Protein, Domain 2"/>
    <property type="match status" value="1"/>
</dbReference>
<dbReference type="Gene3D" id="3.30.980.10">
    <property type="entry name" value="Threonyl-trna Synthetase, Chain A, domain 2"/>
    <property type="match status" value="1"/>
</dbReference>
<dbReference type="HAMAP" id="MF_00184">
    <property type="entry name" value="Thr_tRNA_synth"/>
    <property type="match status" value="1"/>
</dbReference>
<dbReference type="InterPro" id="IPR002314">
    <property type="entry name" value="aa-tRNA-synt_IIb"/>
</dbReference>
<dbReference type="InterPro" id="IPR006195">
    <property type="entry name" value="aa-tRNA-synth_II"/>
</dbReference>
<dbReference type="InterPro" id="IPR045864">
    <property type="entry name" value="aa-tRNA-synth_II/BPL/LPL"/>
</dbReference>
<dbReference type="InterPro" id="IPR004154">
    <property type="entry name" value="Anticodon-bd"/>
</dbReference>
<dbReference type="InterPro" id="IPR036621">
    <property type="entry name" value="Anticodon-bd_dom_sf"/>
</dbReference>
<dbReference type="InterPro" id="IPR012675">
    <property type="entry name" value="Beta-grasp_dom_sf"/>
</dbReference>
<dbReference type="InterPro" id="IPR004095">
    <property type="entry name" value="TGS"/>
</dbReference>
<dbReference type="InterPro" id="IPR012676">
    <property type="entry name" value="TGS-like"/>
</dbReference>
<dbReference type="InterPro" id="IPR002320">
    <property type="entry name" value="Thr-tRNA-ligase_IIa"/>
</dbReference>
<dbReference type="InterPro" id="IPR018163">
    <property type="entry name" value="Thr/Ala-tRNA-synth_IIc_edit"/>
</dbReference>
<dbReference type="InterPro" id="IPR047246">
    <property type="entry name" value="ThrRS_anticodon"/>
</dbReference>
<dbReference type="InterPro" id="IPR033728">
    <property type="entry name" value="ThrRS_core"/>
</dbReference>
<dbReference type="InterPro" id="IPR012947">
    <property type="entry name" value="tRNA_SAD"/>
</dbReference>
<dbReference type="NCBIfam" id="TIGR00418">
    <property type="entry name" value="thrS"/>
    <property type="match status" value="1"/>
</dbReference>
<dbReference type="PANTHER" id="PTHR11451:SF44">
    <property type="entry name" value="THREONINE--TRNA LIGASE, CHLOROPLASTIC_MITOCHONDRIAL 2"/>
    <property type="match status" value="1"/>
</dbReference>
<dbReference type="PANTHER" id="PTHR11451">
    <property type="entry name" value="THREONINE-TRNA LIGASE"/>
    <property type="match status" value="1"/>
</dbReference>
<dbReference type="Pfam" id="PF03129">
    <property type="entry name" value="HGTP_anticodon"/>
    <property type="match status" value="1"/>
</dbReference>
<dbReference type="Pfam" id="PF02824">
    <property type="entry name" value="TGS"/>
    <property type="match status" value="1"/>
</dbReference>
<dbReference type="Pfam" id="PF00587">
    <property type="entry name" value="tRNA-synt_2b"/>
    <property type="match status" value="1"/>
</dbReference>
<dbReference type="Pfam" id="PF07973">
    <property type="entry name" value="tRNA_SAD"/>
    <property type="match status" value="1"/>
</dbReference>
<dbReference type="PRINTS" id="PR01047">
    <property type="entry name" value="TRNASYNTHTHR"/>
</dbReference>
<dbReference type="SMART" id="SM00863">
    <property type="entry name" value="tRNA_SAD"/>
    <property type="match status" value="1"/>
</dbReference>
<dbReference type="SUPFAM" id="SSF52954">
    <property type="entry name" value="Class II aaRS ABD-related"/>
    <property type="match status" value="1"/>
</dbReference>
<dbReference type="SUPFAM" id="SSF55681">
    <property type="entry name" value="Class II aaRS and biotin synthetases"/>
    <property type="match status" value="1"/>
</dbReference>
<dbReference type="SUPFAM" id="SSF81271">
    <property type="entry name" value="TGS-like"/>
    <property type="match status" value="1"/>
</dbReference>
<dbReference type="SUPFAM" id="SSF55186">
    <property type="entry name" value="ThrRS/AlaRS common domain"/>
    <property type="match status" value="1"/>
</dbReference>
<dbReference type="PROSITE" id="PS50862">
    <property type="entry name" value="AA_TRNA_LIGASE_II"/>
    <property type="match status" value="1"/>
</dbReference>
<dbReference type="PROSITE" id="PS51880">
    <property type="entry name" value="TGS"/>
    <property type="match status" value="1"/>
</dbReference>
<comment type="function">
    <text evidence="1">Catalyzes the attachment of threonine to tRNA(Thr) in a two-step reaction: L-threonine is first activated by ATP to form Thr-AMP and then transferred to the acceptor end of tRNA(Thr). Also edits incorrectly charged L-seryl-tRNA(Thr).</text>
</comment>
<comment type="catalytic activity">
    <reaction evidence="1">
        <text>tRNA(Thr) + L-threonine + ATP = L-threonyl-tRNA(Thr) + AMP + diphosphate + H(+)</text>
        <dbReference type="Rhea" id="RHEA:24624"/>
        <dbReference type="Rhea" id="RHEA-COMP:9670"/>
        <dbReference type="Rhea" id="RHEA-COMP:9704"/>
        <dbReference type="ChEBI" id="CHEBI:15378"/>
        <dbReference type="ChEBI" id="CHEBI:30616"/>
        <dbReference type="ChEBI" id="CHEBI:33019"/>
        <dbReference type="ChEBI" id="CHEBI:57926"/>
        <dbReference type="ChEBI" id="CHEBI:78442"/>
        <dbReference type="ChEBI" id="CHEBI:78534"/>
        <dbReference type="ChEBI" id="CHEBI:456215"/>
        <dbReference type="EC" id="6.1.1.3"/>
    </reaction>
</comment>
<comment type="cofactor">
    <cofactor evidence="1">
        <name>Zn(2+)</name>
        <dbReference type="ChEBI" id="CHEBI:29105"/>
    </cofactor>
    <text evidence="1">Binds 1 zinc ion per subunit.</text>
</comment>
<comment type="subunit">
    <text evidence="1">Homodimer.</text>
</comment>
<comment type="subcellular location">
    <subcellularLocation>
        <location evidence="1">Cytoplasm</location>
    </subcellularLocation>
</comment>
<comment type="similarity">
    <text evidence="1">Belongs to the class-II aminoacyl-tRNA synthetase family.</text>
</comment>
<sequence length="640" mass="73078">MPIITLPDGSQRSFDHPVSVAEVAQSIGAGLAKATLAGKVDGRLVDACDTIERDATLQIITPKDEEGLEIIRHSCAHLVGHAVKQLYPTAKMVIGPVIEEGFYYDIFFERPFTPEDMAAIQQRMRELIDKDYDVIKKMTPRAEVIELFKSRGEDYKLRLIDDMPDEKAMGLYFHEEYVDMCRGPHVPNTRFLKAFQLTKISGAYWRGDSKNEQLQRIYGTAWADKKQLAAYIQRIEEAEKRDHRRIGKQLDLFHLQEEAPGMVFWHPNGWSVYQVLEQYMRKVQRDHGYVEVRTPQVVDRILWERSGHWSNYAENMFTTASESRDYAVKPMNCPCHVQIFNQGLKSYRDLPLRLAEFGACHRNEPSGALHGIMRVRGFTQDDAHIFCTEEQVKKEAADFIKLTLQVYRDFGFTDIAMKLSTRPAKRVGSDELWDRAEGALADALNESGLAWEYQPGEGAFYGPKIEFTLKDCLGRNWQCGTLQYDPNLPERLDASYIAEDNNRKRPVMLHRAILGSFERFIGMLIEHYAGAFPAWLAPTQAVVMNITDKQADFAAEVVRILGESGFRAKSDLRNEKIGFKIREHTLLKVPYLLVIGDREVESKAVAVRTREGEDLGSMPVTQFAELLAQAVSRRGRQDSE</sequence>
<feature type="chain" id="PRO_1000020470" description="Threonine--tRNA ligase">
    <location>
        <begin position="1"/>
        <end position="640"/>
    </location>
</feature>
<feature type="domain" description="TGS" evidence="2">
    <location>
        <begin position="1"/>
        <end position="61"/>
    </location>
</feature>
<feature type="region of interest" description="Catalytic" evidence="1">
    <location>
        <begin position="242"/>
        <end position="533"/>
    </location>
</feature>
<feature type="binding site" evidence="1">
    <location>
        <position position="333"/>
    </location>
    <ligand>
        <name>Zn(2+)</name>
        <dbReference type="ChEBI" id="CHEBI:29105"/>
    </ligand>
</feature>
<feature type="binding site" evidence="1">
    <location>
        <position position="384"/>
    </location>
    <ligand>
        <name>Zn(2+)</name>
        <dbReference type="ChEBI" id="CHEBI:29105"/>
    </ligand>
</feature>
<feature type="binding site" evidence="1">
    <location>
        <position position="510"/>
    </location>
    <ligand>
        <name>Zn(2+)</name>
        <dbReference type="ChEBI" id="CHEBI:29105"/>
    </ligand>
</feature>
<reference key="1">
    <citation type="submission" date="2007-06" db="EMBL/GenBank/DDBJ databases">
        <authorList>
            <person name="Dodson R.J."/>
            <person name="Harkins D."/>
            <person name="Paulsen I.T."/>
        </authorList>
    </citation>
    <scope>NUCLEOTIDE SEQUENCE [LARGE SCALE GENOMIC DNA]</scope>
    <source>
        <strain>DSM 24068 / PA7</strain>
    </source>
</reference>
<gene>
    <name evidence="1" type="primary">thrS</name>
    <name type="ordered locus">PSPA7_2504</name>
</gene>
<protein>
    <recommendedName>
        <fullName evidence="1">Threonine--tRNA ligase</fullName>
        <ecNumber evidence="1">6.1.1.3</ecNumber>
    </recommendedName>
    <alternativeName>
        <fullName evidence="1">Threonyl-tRNA synthetase</fullName>
        <shortName evidence="1">ThrRS</shortName>
    </alternativeName>
</protein>
<evidence type="ECO:0000255" key="1">
    <source>
        <dbReference type="HAMAP-Rule" id="MF_00184"/>
    </source>
</evidence>
<evidence type="ECO:0000255" key="2">
    <source>
        <dbReference type="PROSITE-ProRule" id="PRU01228"/>
    </source>
</evidence>
<proteinExistence type="inferred from homology"/>
<keyword id="KW-0030">Aminoacyl-tRNA synthetase</keyword>
<keyword id="KW-0067">ATP-binding</keyword>
<keyword id="KW-0963">Cytoplasm</keyword>
<keyword id="KW-0436">Ligase</keyword>
<keyword id="KW-0479">Metal-binding</keyword>
<keyword id="KW-0547">Nucleotide-binding</keyword>
<keyword id="KW-0648">Protein biosynthesis</keyword>
<keyword id="KW-0694">RNA-binding</keyword>
<keyword id="KW-0820">tRNA-binding</keyword>
<keyword id="KW-0862">Zinc</keyword>
<organism>
    <name type="scientific">Pseudomonas paraeruginosa (strain DSM 24068 / PA7)</name>
    <name type="common">Pseudomonas aeruginosa (strain PA7)</name>
    <dbReference type="NCBI Taxonomy" id="381754"/>
    <lineage>
        <taxon>Bacteria</taxon>
        <taxon>Pseudomonadati</taxon>
        <taxon>Pseudomonadota</taxon>
        <taxon>Gammaproteobacteria</taxon>
        <taxon>Pseudomonadales</taxon>
        <taxon>Pseudomonadaceae</taxon>
        <taxon>Pseudomonas</taxon>
        <taxon>Pseudomonas paraeruginosa</taxon>
    </lineage>
</organism>
<accession>A6V485</accession>